<gene>
    <name evidence="1" type="primary">fusA</name>
    <name type="ordered locus">Teth39_0371</name>
</gene>
<feature type="chain" id="PRO_1000091774" description="Elongation factor G">
    <location>
        <begin position="1"/>
        <end position="689"/>
    </location>
</feature>
<feature type="domain" description="tr-type G">
    <location>
        <begin position="8"/>
        <end position="282"/>
    </location>
</feature>
<feature type="binding site" evidence="1">
    <location>
        <begin position="17"/>
        <end position="24"/>
    </location>
    <ligand>
        <name>GTP</name>
        <dbReference type="ChEBI" id="CHEBI:37565"/>
    </ligand>
</feature>
<feature type="binding site" evidence="1">
    <location>
        <begin position="81"/>
        <end position="85"/>
    </location>
    <ligand>
        <name>GTP</name>
        <dbReference type="ChEBI" id="CHEBI:37565"/>
    </ligand>
</feature>
<feature type="binding site" evidence="1">
    <location>
        <begin position="135"/>
        <end position="138"/>
    </location>
    <ligand>
        <name>GTP</name>
        <dbReference type="ChEBI" id="CHEBI:37565"/>
    </ligand>
</feature>
<accession>B0KCJ7</accession>
<protein>
    <recommendedName>
        <fullName evidence="1">Elongation factor G</fullName>
        <shortName evidence="1">EF-G</shortName>
    </recommendedName>
</protein>
<dbReference type="EMBL" id="CP000924">
    <property type="protein sequence ID" value="ABY94040.1"/>
    <property type="molecule type" value="Genomic_DNA"/>
</dbReference>
<dbReference type="RefSeq" id="WP_009052835.1">
    <property type="nucleotide sequence ID" value="NC_010321.1"/>
</dbReference>
<dbReference type="SMR" id="B0KCJ7"/>
<dbReference type="STRING" id="340099.Teth39_0371"/>
<dbReference type="KEGG" id="tpd:Teth39_0371"/>
<dbReference type="eggNOG" id="COG0480">
    <property type="taxonomic scope" value="Bacteria"/>
</dbReference>
<dbReference type="HOGENOM" id="CLU_002794_4_1_9"/>
<dbReference type="Proteomes" id="UP000002156">
    <property type="component" value="Chromosome"/>
</dbReference>
<dbReference type="GO" id="GO:0005737">
    <property type="term" value="C:cytoplasm"/>
    <property type="evidence" value="ECO:0007669"/>
    <property type="project" value="UniProtKB-SubCell"/>
</dbReference>
<dbReference type="GO" id="GO:0005525">
    <property type="term" value="F:GTP binding"/>
    <property type="evidence" value="ECO:0007669"/>
    <property type="project" value="UniProtKB-UniRule"/>
</dbReference>
<dbReference type="GO" id="GO:0003924">
    <property type="term" value="F:GTPase activity"/>
    <property type="evidence" value="ECO:0007669"/>
    <property type="project" value="InterPro"/>
</dbReference>
<dbReference type="GO" id="GO:0003746">
    <property type="term" value="F:translation elongation factor activity"/>
    <property type="evidence" value="ECO:0007669"/>
    <property type="project" value="UniProtKB-UniRule"/>
</dbReference>
<dbReference type="GO" id="GO:0032790">
    <property type="term" value="P:ribosome disassembly"/>
    <property type="evidence" value="ECO:0007669"/>
    <property type="project" value="TreeGrafter"/>
</dbReference>
<dbReference type="CDD" id="cd01886">
    <property type="entry name" value="EF-G"/>
    <property type="match status" value="1"/>
</dbReference>
<dbReference type="CDD" id="cd16262">
    <property type="entry name" value="EFG_III"/>
    <property type="match status" value="1"/>
</dbReference>
<dbReference type="CDD" id="cd01434">
    <property type="entry name" value="EFG_mtEFG1_IV"/>
    <property type="match status" value="1"/>
</dbReference>
<dbReference type="CDD" id="cd03713">
    <property type="entry name" value="EFG_mtEFG_C"/>
    <property type="match status" value="1"/>
</dbReference>
<dbReference type="CDD" id="cd04088">
    <property type="entry name" value="EFG_mtEFG_II"/>
    <property type="match status" value="1"/>
</dbReference>
<dbReference type="FunFam" id="2.40.30.10:FF:000006">
    <property type="entry name" value="Elongation factor G"/>
    <property type="match status" value="1"/>
</dbReference>
<dbReference type="FunFam" id="3.30.230.10:FF:000003">
    <property type="entry name" value="Elongation factor G"/>
    <property type="match status" value="1"/>
</dbReference>
<dbReference type="FunFam" id="3.30.70.240:FF:000001">
    <property type="entry name" value="Elongation factor G"/>
    <property type="match status" value="1"/>
</dbReference>
<dbReference type="FunFam" id="3.30.70.870:FF:000001">
    <property type="entry name" value="Elongation factor G"/>
    <property type="match status" value="1"/>
</dbReference>
<dbReference type="FunFam" id="3.40.50.300:FF:000029">
    <property type="entry name" value="Elongation factor G"/>
    <property type="match status" value="1"/>
</dbReference>
<dbReference type="Gene3D" id="3.30.230.10">
    <property type="match status" value="1"/>
</dbReference>
<dbReference type="Gene3D" id="3.30.70.240">
    <property type="match status" value="1"/>
</dbReference>
<dbReference type="Gene3D" id="3.30.70.870">
    <property type="entry name" value="Elongation Factor G (Translational Gtpase), domain 3"/>
    <property type="match status" value="1"/>
</dbReference>
<dbReference type="Gene3D" id="3.40.50.300">
    <property type="entry name" value="P-loop containing nucleotide triphosphate hydrolases"/>
    <property type="match status" value="1"/>
</dbReference>
<dbReference type="Gene3D" id="2.40.30.10">
    <property type="entry name" value="Translation factors"/>
    <property type="match status" value="1"/>
</dbReference>
<dbReference type="HAMAP" id="MF_00054_B">
    <property type="entry name" value="EF_G_EF_2_B"/>
    <property type="match status" value="1"/>
</dbReference>
<dbReference type="InterPro" id="IPR053905">
    <property type="entry name" value="EF-G-like_DII"/>
</dbReference>
<dbReference type="InterPro" id="IPR041095">
    <property type="entry name" value="EFG_II"/>
</dbReference>
<dbReference type="InterPro" id="IPR009022">
    <property type="entry name" value="EFG_III"/>
</dbReference>
<dbReference type="InterPro" id="IPR035647">
    <property type="entry name" value="EFG_III/V"/>
</dbReference>
<dbReference type="InterPro" id="IPR047872">
    <property type="entry name" value="EFG_IV"/>
</dbReference>
<dbReference type="InterPro" id="IPR035649">
    <property type="entry name" value="EFG_V"/>
</dbReference>
<dbReference type="InterPro" id="IPR000640">
    <property type="entry name" value="EFG_V-like"/>
</dbReference>
<dbReference type="InterPro" id="IPR031157">
    <property type="entry name" value="G_TR_CS"/>
</dbReference>
<dbReference type="InterPro" id="IPR027417">
    <property type="entry name" value="P-loop_NTPase"/>
</dbReference>
<dbReference type="InterPro" id="IPR020568">
    <property type="entry name" value="Ribosomal_Su5_D2-typ_SF"/>
</dbReference>
<dbReference type="InterPro" id="IPR014721">
    <property type="entry name" value="Ribsml_uS5_D2-typ_fold_subgr"/>
</dbReference>
<dbReference type="InterPro" id="IPR005225">
    <property type="entry name" value="Small_GTP-bd"/>
</dbReference>
<dbReference type="InterPro" id="IPR000795">
    <property type="entry name" value="T_Tr_GTP-bd_dom"/>
</dbReference>
<dbReference type="InterPro" id="IPR009000">
    <property type="entry name" value="Transl_B-barrel_sf"/>
</dbReference>
<dbReference type="InterPro" id="IPR004540">
    <property type="entry name" value="Transl_elong_EFG/EF2"/>
</dbReference>
<dbReference type="InterPro" id="IPR005517">
    <property type="entry name" value="Transl_elong_EFG/EF2_IV"/>
</dbReference>
<dbReference type="NCBIfam" id="TIGR00484">
    <property type="entry name" value="EF-G"/>
    <property type="match status" value="1"/>
</dbReference>
<dbReference type="NCBIfam" id="NF009379">
    <property type="entry name" value="PRK12740.1-3"/>
    <property type="match status" value="1"/>
</dbReference>
<dbReference type="NCBIfam" id="NF009381">
    <property type="entry name" value="PRK12740.1-5"/>
    <property type="match status" value="1"/>
</dbReference>
<dbReference type="NCBIfam" id="NF009891">
    <property type="entry name" value="PRK13351.1-1"/>
    <property type="match status" value="1"/>
</dbReference>
<dbReference type="NCBIfam" id="TIGR00231">
    <property type="entry name" value="small_GTP"/>
    <property type="match status" value="1"/>
</dbReference>
<dbReference type="PANTHER" id="PTHR43261:SF1">
    <property type="entry name" value="RIBOSOME-RELEASING FACTOR 2, MITOCHONDRIAL"/>
    <property type="match status" value="1"/>
</dbReference>
<dbReference type="PANTHER" id="PTHR43261">
    <property type="entry name" value="TRANSLATION ELONGATION FACTOR G-RELATED"/>
    <property type="match status" value="1"/>
</dbReference>
<dbReference type="Pfam" id="PF22042">
    <property type="entry name" value="EF-G_D2"/>
    <property type="match status" value="1"/>
</dbReference>
<dbReference type="Pfam" id="PF00679">
    <property type="entry name" value="EFG_C"/>
    <property type="match status" value="1"/>
</dbReference>
<dbReference type="Pfam" id="PF14492">
    <property type="entry name" value="EFG_III"/>
    <property type="match status" value="1"/>
</dbReference>
<dbReference type="Pfam" id="PF03764">
    <property type="entry name" value="EFG_IV"/>
    <property type="match status" value="1"/>
</dbReference>
<dbReference type="Pfam" id="PF00009">
    <property type="entry name" value="GTP_EFTU"/>
    <property type="match status" value="1"/>
</dbReference>
<dbReference type="PRINTS" id="PR00315">
    <property type="entry name" value="ELONGATNFCT"/>
</dbReference>
<dbReference type="SMART" id="SM00838">
    <property type="entry name" value="EFG_C"/>
    <property type="match status" value="1"/>
</dbReference>
<dbReference type="SMART" id="SM00889">
    <property type="entry name" value="EFG_IV"/>
    <property type="match status" value="1"/>
</dbReference>
<dbReference type="SUPFAM" id="SSF54980">
    <property type="entry name" value="EF-G C-terminal domain-like"/>
    <property type="match status" value="2"/>
</dbReference>
<dbReference type="SUPFAM" id="SSF52540">
    <property type="entry name" value="P-loop containing nucleoside triphosphate hydrolases"/>
    <property type="match status" value="1"/>
</dbReference>
<dbReference type="SUPFAM" id="SSF54211">
    <property type="entry name" value="Ribosomal protein S5 domain 2-like"/>
    <property type="match status" value="1"/>
</dbReference>
<dbReference type="SUPFAM" id="SSF50447">
    <property type="entry name" value="Translation proteins"/>
    <property type="match status" value="1"/>
</dbReference>
<dbReference type="PROSITE" id="PS00301">
    <property type="entry name" value="G_TR_1"/>
    <property type="match status" value="1"/>
</dbReference>
<dbReference type="PROSITE" id="PS51722">
    <property type="entry name" value="G_TR_2"/>
    <property type="match status" value="1"/>
</dbReference>
<evidence type="ECO:0000255" key="1">
    <source>
        <dbReference type="HAMAP-Rule" id="MF_00054"/>
    </source>
</evidence>
<comment type="function">
    <text evidence="1">Catalyzes the GTP-dependent ribosomal translocation step during translation elongation. During this step, the ribosome changes from the pre-translocational (PRE) to the post-translocational (POST) state as the newly formed A-site-bound peptidyl-tRNA and P-site-bound deacylated tRNA move to the P and E sites, respectively. Catalyzes the coordinated movement of the two tRNA molecules, the mRNA and conformational changes in the ribosome.</text>
</comment>
<comment type="subcellular location">
    <subcellularLocation>
        <location evidence="1">Cytoplasm</location>
    </subcellularLocation>
</comment>
<comment type="similarity">
    <text evidence="1">Belongs to the TRAFAC class translation factor GTPase superfamily. Classic translation factor GTPase family. EF-G/EF-2 subfamily.</text>
</comment>
<name>EFG_THEP3</name>
<proteinExistence type="inferred from homology"/>
<organism>
    <name type="scientific">Thermoanaerobacter pseudethanolicus (strain ATCC 33223 / 39E)</name>
    <name type="common">Clostridium thermohydrosulfuricum</name>
    <dbReference type="NCBI Taxonomy" id="340099"/>
    <lineage>
        <taxon>Bacteria</taxon>
        <taxon>Bacillati</taxon>
        <taxon>Bacillota</taxon>
        <taxon>Clostridia</taxon>
        <taxon>Thermoanaerobacterales</taxon>
        <taxon>Thermoanaerobacteraceae</taxon>
        <taxon>Thermoanaerobacter</taxon>
    </lineage>
</organism>
<keyword id="KW-0963">Cytoplasm</keyword>
<keyword id="KW-0251">Elongation factor</keyword>
<keyword id="KW-0342">GTP-binding</keyword>
<keyword id="KW-0547">Nucleotide-binding</keyword>
<keyword id="KW-0648">Protein biosynthesis</keyword>
<keyword id="KW-1185">Reference proteome</keyword>
<reference key="1">
    <citation type="submission" date="2008-01" db="EMBL/GenBank/DDBJ databases">
        <title>Complete sequence of Thermoanaerobacter pseudethanolicus 39E.</title>
        <authorList>
            <person name="Copeland A."/>
            <person name="Lucas S."/>
            <person name="Lapidus A."/>
            <person name="Barry K."/>
            <person name="Glavina del Rio T."/>
            <person name="Dalin E."/>
            <person name="Tice H."/>
            <person name="Pitluck S."/>
            <person name="Bruce D."/>
            <person name="Goodwin L."/>
            <person name="Saunders E."/>
            <person name="Brettin T."/>
            <person name="Detter J.C."/>
            <person name="Han C."/>
            <person name="Schmutz J."/>
            <person name="Larimer F."/>
            <person name="Land M."/>
            <person name="Hauser L."/>
            <person name="Kyrpides N."/>
            <person name="Lykidis A."/>
            <person name="Hemme C."/>
            <person name="Fields M.W."/>
            <person name="He Z."/>
            <person name="Zhou J."/>
            <person name="Richardson P."/>
        </authorList>
    </citation>
    <scope>NUCLEOTIDE SEQUENCE [LARGE SCALE GENOMIC DNA]</scope>
    <source>
        <strain>ATCC 33223 / DSM 2355 / 39E</strain>
    </source>
</reference>
<sequence>MPRDYSLDKVRNIGIMAHIDAGKTTTTERILFYTGKVHKLGEVHEGTATMDWMVQEQERGITITSAATTCYWKGHKINIIDTPGHVDFTVEVERSLRILDGAVAVFSAKEGVEPQSETVWRQADKYHVPRIAYVNKMDIIGADFFNVIKMIKERLGANPVAIQIPIGKEDTFRGIVDLIKMEAIIYEDDLGTVMDETEIPDDLKDLAEEYREKLLEAVSEQDETILEKYLEGEEITEEEIHKALRKGTINGELVPVVCGSSYKNKGIQPMLDAIVRYLPSPLDLPPVKGMALATGEEIERKADDSEPFSALAFKIMADPYVGKLAFFRVYSGTLNAGSYVLNSTKGKKERISRILQMHANHRQEMEAVYTGDIAAAVGLKDTTTGDTLCDENHPILLESMDFPEPVISVAIEPKTKAAQEKMTTALLKLAEEDPTFKTYTDQETGQTIIAGMGELHLEIIVDRLRREFNVDCNVGKPQVAYKETITKPVKIEGKFIRQSGGRGQYGHVWLEMEPAPRGEGYTFENRIVGGVIPKEYIPAVDAGVQEAMQNGVLGGYPVIDVKVALVDGSYHEVDSSDMAFKIAGSIAFKEGMKKANPVLLEPIMKVEVVVPEEYMGDIIGDINARRGRVEGMEARAGAQVIRAFVPLAEMFGYATDLRSKTQGRGTYTMQFHHYEEVPKNIADQILEKK</sequence>